<organism>
    <name type="scientific">Cordyceps militaris (strain CM01)</name>
    <name type="common">Caterpillar fungus</name>
    <dbReference type="NCBI Taxonomy" id="983644"/>
    <lineage>
        <taxon>Eukaryota</taxon>
        <taxon>Fungi</taxon>
        <taxon>Dikarya</taxon>
        <taxon>Ascomycota</taxon>
        <taxon>Pezizomycotina</taxon>
        <taxon>Sordariomycetes</taxon>
        <taxon>Hypocreomycetidae</taxon>
        <taxon>Hypocreales</taxon>
        <taxon>Cordycipitaceae</taxon>
        <taxon>Cordyceps</taxon>
    </lineage>
</organism>
<reference key="1">
    <citation type="journal article" date="2011" name="Genome Biol.">
        <title>Genome sequence of the insect pathogenic fungus Cordyceps militaris, a valued traditional Chinese medicine.</title>
        <authorList>
            <person name="Zheng P."/>
            <person name="Xia Y."/>
            <person name="Xiao G."/>
            <person name="Xiong C."/>
            <person name="Hu X."/>
            <person name="Zhang S."/>
            <person name="Zheng H."/>
            <person name="Huang Y."/>
            <person name="Zhou Y."/>
            <person name="Wang S."/>
            <person name="Zhao G.-P."/>
            <person name="Liu X."/>
            <person name="St Leger R.J."/>
            <person name="Wang C."/>
        </authorList>
    </citation>
    <scope>NUCLEOTIDE SEQUENCE [LARGE SCALE GENOMIC DNA]</scope>
    <source>
        <strain>CM01</strain>
    </source>
</reference>
<reference key="2">
    <citation type="journal article" date="1998" name="Antimicrob. Agents Chemother.">
        <title>Antifungal activity of 3'-deoxyadenosine (cordycepin).</title>
        <authorList>
            <person name="Sugar A.M."/>
            <person name="McCaffrey R.P."/>
        </authorList>
    </citation>
    <scope>BIOTECHNOLOGY</scope>
</reference>
<reference key="3">
    <citation type="journal article" date="2017" name="Cell Chem. Biol.">
        <title>Fungal Cordycepin Biosynthesis Is Coupled with the Production of the Safeguard Molecule Pentostatin.</title>
        <authorList>
            <person name="Xia Y."/>
            <person name="Luo F."/>
            <person name="Shang Y."/>
            <person name="Chen P."/>
            <person name="Lu Y."/>
            <person name="Wang C."/>
        </authorList>
    </citation>
    <scope>FUNCTION</scope>
    <scope>CATALYTIC ACTIVITY</scope>
    <scope>DISRUPTION PHENOTYPE</scope>
    <scope>SUBCELLULAR LOCATION</scope>
    <scope>INTERACTION WITH CNS2</scope>
    <scope>PATHWAY</scope>
</reference>
<reference key="4">
    <citation type="journal article" date="2018" name="Cell. Death. Discov.">
        <title>Cordycepin induces apoptosis of human ovarian cancer cells by inhibiting CCL5-mediated Akt/NF-kappaB signaling pathway.</title>
        <authorList>
            <person name="Cui Z.Y."/>
            <person name="Park S.J."/>
            <person name="Jo E."/>
            <person name="Hwang I.H."/>
            <person name="Lee K.B."/>
            <person name="Kim S.W."/>
            <person name="Kim D.J."/>
            <person name="Joo J.C."/>
            <person name="Hong S.H."/>
            <person name="Lee M.G."/>
            <person name="Jang I.S."/>
        </authorList>
    </citation>
    <scope>BIOTECHNOLOGY</scope>
</reference>
<reference key="5">
    <citation type="journal article" date="2019" name="J. Cancer">
        <title>Cordycepin Induces Apoptosis and G2/M Phase Arrest through the ERK Pathways in Esophageal Cancer Cells.</title>
        <authorList>
            <person name="Xu J.C."/>
            <person name="Zhou X.P."/>
            <person name="Wang X.A."/>
            <person name="Xu M.D."/>
            <person name="Chen T."/>
            <person name="Chen T.Y."/>
            <person name="Zhou P.H."/>
            <person name="Zhang Y.Q."/>
        </authorList>
    </citation>
    <scope>BIOTECHNOLOGY</scope>
</reference>
<reference key="6">
    <citation type="journal article" date="2019" name="J. Microbiol.">
        <title>Antimicrobial effect and proposed action mechanism of cordycepin against Escherichia coli and Bacillus subtilis.</title>
        <authorList>
            <person name="Jiang Q."/>
            <person name="Lou Z."/>
            <person name="Wang H."/>
            <person name="Chen C."/>
        </authorList>
    </citation>
    <scope>BIOTECHNOLOGY</scope>
</reference>
<reference key="7">
    <citation type="journal article" date="2020" name="Front. Microbiol.">
        <title>Transcriptome Analysis Reveals the Flexibility of Cordycepin Network in Cordyceps militaris Activated by L-Alanine Addition.</title>
        <authorList>
            <person name="Chen B.X."/>
            <person name="Wei T."/>
            <person name="Xue L.N."/>
            <person name="Zheng Q.W."/>
            <person name="Ye Z.W."/>
            <person name="Zou Y."/>
            <person name="Yang Y."/>
            <person name="Yun F."/>
            <person name="Guo L.Q."/>
            <person name="Lin J.F."/>
        </authorList>
    </citation>
    <scope>INDUCTION</scope>
</reference>
<reference key="8">
    <citation type="journal article" date="2020" name="Immunopharmacol. Immunotoxicol.">
        <title>Cordycepin exhibits a suppressive effect on T cells through inhibiting TCR signaling cascade in CFA-induced inflammation mice model.</title>
        <authorList>
            <person name="Wang X."/>
            <person name="Xi D."/>
            <person name="Mo J."/>
            <person name="Wang K."/>
            <person name="Luo Y."/>
            <person name="Xia E."/>
            <person name="Huang R."/>
            <person name="Luo S."/>
            <person name="Wei J."/>
            <person name="Ren Z."/>
            <person name="Pang H."/>
            <person name="Yang R."/>
        </authorList>
    </citation>
    <scope>BIOTECHNOLOGY</scope>
</reference>
<reference key="9">
    <citation type="journal article" date="2022" name="J. Biomol. Struct. Dyn.">
        <title>Cordycepin: a bioactive metabolite of Cordyceps militaris and polyadenylation inhibitor with therapeutic potential against COVID-19.</title>
        <authorList>
            <person name="Verma A.K."/>
        </authorList>
    </citation>
    <scope>BIOTECHNOLOGY</scope>
</reference>
<reference key="10">
    <citation type="journal article" date="2023" name="Int. Microbiol.">
        <title>A novel complementary pathway of cordycepin biosynthesis in Cordyceps militaris.</title>
        <authorList>
            <person name="Zhang H."/>
            <person name="Yang J."/>
            <person name="Luo S."/>
            <person name="Liu L."/>
            <person name="Yang G."/>
            <person name="Gao B."/>
            <person name="Fan H."/>
            <person name="Deng L."/>
            <person name="Yang M."/>
        </authorList>
    </citation>
    <scope>FUNCTION</scope>
</reference>
<reference key="11">
    <citation type="journal article" date="2024" name="Genes (Basel)">
        <title>Genomic and Transcriptome Analysis Reveals the Biosynthesis Network of Cordycepin in Cordyceps militaris.</title>
        <authorList>
            <person name="Chai L."/>
            <person name="Li J."/>
            <person name="Guo L."/>
            <person name="Zhang S."/>
            <person name="Chen F."/>
            <person name="Zhu W."/>
            <person name="Li Y."/>
        </authorList>
    </citation>
    <scope>INDUCTION</scope>
</reference>
<reference key="12">
    <citation type="journal article" date="2024" name="Int. J. Med. Mushrooms">
        <title>Evidence for Regulation of Cordycepin Biosynthesis by Transcription Factors Krueppel-Like Factor 4 and Retinoid X Receptor Alpha in Caterpillar Medicinal Mushroom Cordyceps militaris (Ascomycetes).</title>
        <authorList>
            <person name="Zhang H."/>
            <person name="Deng L."/>
            <person name="Luo S."/>
            <person name="Liu L."/>
            <person name="Yang G."/>
            <person name="Zhang Y."/>
            <person name="Gao B."/>
            <person name="Yang D."/>
            <person name="Wang X."/>
            <person name="Li S."/>
            <person name="Li X."/>
            <person name="Jiang Y."/>
            <person name="Lao W."/>
            <person name="Vriesekoop F."/>
        </authorList>
    </citation>
    <scope>INDUCTION</scope>
</reference>
<dbReference type="EC" id="1.-.-.-" evidence="1"/>
<dbReference type="EMBL" id="JH126401">
    <property type="protein sequence ID" value="EGX93064.1"/>
    <property type="molecule type" value="Genomic_DNA"/>
</dbReference>
<dbReference type="RefSeq" id="XP_006669647.1">
    <property type="nucleotide sequence ID" value="XM_006669584.1"/>
</dbReference>
<dbReference type="SMR" id="G3JF08"/>
<dbReference type="STRING" id="983644.G3JF08"/>
<dbReference type="GeneID" id="18166459"/>
<dbReference type="KEGG" id="cmt:CCM_04436"/>
<dbReference type="VEuPathDB" id="FungiDB:CCM_04436"/>
<dbReference type="eggNOG" id="ENOG502SIG7">
    <property type="taxonomic scope" value="Eukaryota"/>
</dbReference>
<dbReference type="HOGENOM" id="CLU_377198_0_0_1"/>
<dbReference type="InParanoid" id="G3JF08"/>
<dbReference type="OMA" id="QATHGAN"/>
<dbReference type="OrthoDB" id="446809at2759"/>
<dbReference type="Proteomes" id="UP000001610">
    <property type="component" value="Unassembled WGS sequence"/>
</dbReference>
<dbReference type="GO" id="GO:0005811">
    <property type="term" value="C:lipid droplet"/>
    <property type="evidence" value="ECO:0007669"/>
    <property type="project" value="UniProtKB-SubCell"/>
</dbReference>
<dbReference type="GO" id="GO:0000166">
    <property type="term" value="F:nucleotide binding"/>
    <property type="evidence" value="ECO:0007669"/>
    <property type="project" value="InterPro"/>
</dbReference>
<dbReference type="GO" id="GO:0016491">
    <property type="term" value="F:oxidoreductase activity"/>
    <property type="evidence" value="ECO:0007669"/>
    <property type="project" value="UniProtKB-KW"/>
</dbReference>
<dbReference type="Gene3D" id="3.30.360.10">
    <property type="entry name" value="Dihydrodipicolinate Reductase, domain 2"/>
    <property type="match status" value="1"/>
</dbReference>
<dbReference type="Gene3D" id="3.40.50.720">
    <property type="entry name" value="NAD(P)-binding Rossmann-like Domain"/>
    <property type="match status" value="1"/>
</dbReference>
<dbReference type="InterPro" id="IPR000683">
    <property type="entry name" value="Gfo/Idh/MocA-like_OxRdtase_N"/>
</dbReference>
<dbReference type="InterPro" id="IPR052515">
    <property type="entry name" value="Gfo/Idh/MocA_Oxidoreductase"/>
</dbReference>
<dbReference type="InterPro" id="IPR036291">
    <property type="entry name" value="NAD(P)-bd_dom_sf"/>
</dbReference>
<dbReference type="PANTHER" id="PTHR43249:SF1">
    <property type="entry name" value="D-GLUCOSIDE 3-DEHYDROGENASE"/>
    <property type="match status" value="1"/>
</dbReference>
<dbReference type="PANTHER" id="PTHR43249">
    <property type="entry name" value="UDP-N-ACETYL-2-AMINO-2-DEOXY-D-GLUCURONATE OXIDASE"/>
    <property type="match status" value="1"/>
</dbReference>
<dbReference type="Pfam" id="PF01408">
    <property type="entry name" value="GFO_IDH_MocA"/>
    <property type="match status" value="1"/>
</dbReference>
<dbReference type="SUPFAM" id="SSF51735">
    <property type="entry name" value="NAD(P)-binding Rossmann-fold domains"/>
    <property type="match status" value="1"/>
</dbReference>
<accession>G3JF08</accession>
<evidence type="ECO:0000269" key="1">
    <source>
    </source>
</evidence>
<evidence type="ECO:0000269" key="2">
    <source>
    </source>
</evidence>
<evidence type="ECO:0000269" key="3">
    <source>
    </source>
</evidence>
<evidence type="ECO:0000269" key="4">
    <source>
    </source>
</evidence>
<evidence type="ECO:0000269" key="5">
    <source>
    </source>
</evidence>
<evidence type="ECO:0000269" key="6">
    <source>
    </source>
</evidence>
<evidence type="ECO:0000269" key="7">
    <source>
    </source>
</evidence>
<evidence type="ECO:0000269" key="8">
    <source>
    </source>
</evidence>
<evidence type="ECO:0000269" key="9">
    <source>
    </source>
</evidence>
<evidence type="ECO:0000269" key="10">
    <source>
    </source>
</evidence>
<evidence type="ECO:0000269" key="11">
    <source>
    </source>
</evidence>
<evidence type="ECO:0000303" key="12">
    <source>
    </source>
</evidence>
<feature type="chain" id="PRO_0000460180" description="Oxidoreductase cns1">
    <location>
        <begin position="1"/>
        <end position="792"/>
    </location>
</feature>
<comment type="function">
    <text evidence="1 8">Oxidoreductase; part of the gene cluster that mediates the biosynthesis of cordycepin (COR) and pentostatin (PTN), two adenosine analogs with related bioactivity profiles as both mimic adenosine and can inhibit some of the processes that are adenosine dependent (PubMed:29056419, PubMed:37987892). Within the pathway, cns1 catalyzes the last step by converting the cns2 product 2'-carbonyl-3'-deoxyadenosine (2'-C-3'-dA) into cordycepin (3'-deoxyadenosine) (PubMed:29056419). The first step of cordycepin biosynthesis involves hydroxyl phosphorylation of the 3'-OH position on adenosine to produce adenosine-3'-monophosphate (3'-AMP), catalyzed by kinase activity of cns3. Next, 3'-AMP is dephosphorylated to 2'-carbonyl-3'-deoxyadenosine by cns2, which is finally converted to cordycepin by the oxidoreductase cns1. Pentostatin production is mediated by the ATP phosphoribosyltransferase activity of cns3 on adenosine to inhibit the activity of adenosine deaminase (ADA) to prevent COR deamination to 3'-deoxyinosine (3'-dI) (PubMed:29056419).</text>
</comment>
<comment type="pathway">
    <text evidence="12">Secondary metabolite biosynthesis.</text>
</comment>
<comment type="subunit">
    <text evidence="1">Interacts with cns2.</text>
</comment>
<comment type="subcellular location">
    <subcellularLocation>
        <location evidence="1">Lipid droplet</location>
    </subcellularLocation>
</comment>
<comment type="induction">
    <text evidence="6 9 10">Expression strongly increases by addition of L-alanine that activates cordycepin production, as well as during the development of fruiting bodies (PubMed:32390960, PubMed:38790255). Expression is positively regulated by the two key transcription factors Kruppel-like factor 4 (Klf4) and retinoid X receptor alpha (Rxra) (PubMed:39171629).</text>
</comment>
<comment type="disruption phenotype">
    <text evidence="1">Impairs the production of cordycepin.</text>
</comment>
<comment type="biotechnology">
    <text evidence="2 3 4 5 7 11">Cordycepin has antitumor, antibacterial, antifungal, antivirus, and immune regulation properties; thus, cordycepin has important value in commerce, medicine, and scientific research.</text>
</comment>
<comment type="miscellaneous">
    <text evidence="1">Cordycepin and pentostatin biosynthesis coupling is an important point of metabolic regulation where pentostatin safeguards cordycepin from deamination by inhibiting adenosine deaminase (ADA) activity. ADA is not inhibited until cordycepin reaches self-toxic levels, at which point ADA derepression occurs allowing for detoxification of cordycepin to 3'-deoxyinosine (3'-dI).</text>
</comment>
<proteinExistence type="evidence at protein level"/>
<keyword id="KW-0551">Lipid droplet</keyword>
<keyword id="KW-0560">Oxidoreductase</keyword>
<keyword id="KW-1185">Reference proteome</keyword>
<name>CNS1_CORMM</name>
<protein>
    <recommendedName>
        <fullName evidence="12">Oxidoreductase cns1</fullName>
        <ecNumber evidence="1">1.-.-.-</ecNumber>
    </recommendedName>
    <alternativeName>
        <fullName evidence="12">Cordycepin biosynthesis cluster protein 1</fullName>
    </alternativeName>
</protein>
<gene>
    <name evidence="12" type="primary">cns1</name>
    <name type="ORF">CCM_04436</name>
</gene>
<sequence length="792" mass="88451">MAMNENAYPTTFPSFERENHRDALRQPFDPAFRRTWSNGVALRQLVDFARPTVANHTMSYALIEYCLSRLPMQHLERLGQLKIPVELHAAPFQYLQKHHRACGFDWVERFVWRTHDLHKPYNFLRPELLLAQESGSQRIVALLTIMPGEDYIRHYASILEVAQHDGAISSHHGPIRCVLYPHLTQSMMAWTGLTELSLSVEPGDILILGFVAELLPRFASLVPTARVIGRQDAQYYGLVRLELRPGLVFSLIGAKYSYWGNLGGRVVRELAARRPRAICYIAKQGTLLSPGDIHRTIYSPTRYCVFDKGQACWHGDDHSALPINPLSSRFPTFDRGLHVSTPTIVEQDVDFRTQVEAHGASSVDNELAQMARALTDVHEENPSMERVQLLPLMFITDYLRRPEELGMTVPFDLTSRNETVHRNKELFLARSAHLVLEAFNVIERPKAIIVGTGYGVKTILPALQRRGVEVVGLCGGRDRAKTEAAGNKHGIPCIDVSLAEVQATHGANLLFVASPHDKHAALVQEALDLGGFDIVCEKPLALDMATMRHFANQSQGSSQLRLMNHPLRFYPPLIQLKAASKEPSNILAIDIQYLTRRLSKLTHWSAGFSKAAGGGMMLAMATHFLDLIEWLTSSSLTPASVQDMSTSNSIGPLPTEDAGATKTPDVESAFQMNGCCGLSTKYSVDCDGAADTELFSVTLRLDNEHELRFIQRKGSPVLLEQRLPGREWLPLKVHWEQRVREGSPWQISFQYFAEELVEAICMGTRSAFADKATGFSDYARQVGVFGSKVGIA</sequence>